<reference key="1">
    <citation type="journal article" date="2005" name="Proc. Natl. Acad. Sci. U.S.A.">
        <title>The psychrophilic lifestyle as revealed by the genome sequence of Colwellia psychrerythraea 34H through genomic and proteomic analyses.</title>
        <authorList>
            <person name="Methe B.A."/>
            <person name="Nelson K.E."/>
            <person name="Deming J.W."/>
            <person name="Momen B."/>
            <person name="Melamud E."/>
            <person name="Zhang X."/>
            <person name="Moult J."/>
            <person name="Madupu R."/>
            <person name="Nelson W.C."/>
            <person name="Dodson R.J."/>
            <person name="Brinkac L.M."/>
            <person name="Daugherty S.C."/>
            <person name="Durkin A.S."/>
            <person name="DeBoy R.T."/>
            <person name="Kolonay J.F."/>
            <person name="Sullivan S.A."/>
            <person name="Zhou L."/>
            <person name="Davidsen T.M."/>
            <person name="Wu M."/>
            <person name="Huston A.L."/>
            <person name="Lewis M."/>
            <person name="Weaver B."/>
            <person name="Weidman J.F."/>
            <person name="Khouri H."/>
            <person name="Utterback T.R."/>
            <person name="Feldblyum T.V."/>
            <person name="Fraser C.M."/>
        </authorList>
    </citation>
    <scope>NUCLEOTIDE SEQUENCE [LARGE SCALE GENOMIC DNA]</scope>
    <source>
        <strain>34H / ATCC BAA-681</strain>
    </source>
</reference>
<sequence length="953" mass="106844">MSDYKQTLNLPATSFAMKGNMANREPNMLKYWAAKDLYGKIREAKKGKKSFILHDGPPYANGNIHLGHAVNKILKDIIVKSKNLSDFNSPFVPGWDCHGLPIELMVEKKVGKPGHKISASDFRQKCREYAAKQVNGQREDFKRLGIFADWEKPYLTMDFGTEANIIRSLGKIAENGHLHQGFKPVHWCTDCGSSLAEAEVEYKDKQSPAIDVKFTISDESVADKFSHPEGHKGEGEIGAVIWTTTPWTLPANRAIAVNAEVEYTLVQCEQAGEKQRLIIASDLVTTCMDRFGFDKYHALGFCKGSELELVQCQHPFYDFTVPVVLGEHVTTDSGTGCVHTAPGHGVEDFVVGKLYDLEVANPVGANGVYLEDTPLLAGQHVFKANASVVELLKEKGALVHHHALDHSYPHCWRHKTPLIFRATPQWFISMDKKGLRQDSLNEIEKTQWIPDWGQRRIESMVEGRPDWCISRQRTWGVPMALFIHQDSGALHPRSIELIEEVALLVEKSGIQAWFDLEAIELIGDDAKEYIKVPDTLDVWFDSGTTHESVIKARDEFDGIADLYLEGSDQHRGWFMSSMISSVAMNGAAPYKQVLTHGFVVDAKGHKMSKSLGNVITPKEITNNLGADILRLWTASVNYTQEITAGDEIFKRQADAYRRIRNTSRFLLSNLTGFEPANHMVAVEDMVALDRWVIDKAARLQEEIINAYDEYEFHVVVHKLMNFCTNELGGFYLDIIKDRQYTAKSDSNARRSCQTAMYLIAEAMTAWMAPILSFTAQEIWEALPLPVSGERDEFVFTGVWFDGLMKQESKQDESTESSDELGNEYWTELLTVRGEVNRALEQARKDKSVGKALEAQVTLFATADLAAKLAKLGDELRFVLITSKATIETVTSAPENALETEVEGLWLTVAPAEGIKCERCWHVTTDIGESEKHPTLCGRCITNIDGEGETRQFA</sequence>
<organism>
    <name type="scientific">Colwellia psychrerythraea (strain 34H / ATCC BAA-681)</name>
    <name type="common">Vibrio psychroerythus</name>
    <dbReference type="NCBI Taxonomy" id="167879"/>
    <lineage>
        <taxon>Bacteria</taxon>
        <taxon>Pseudomonadati</taxon>
        <taxon>Pseudomonadota</taxon>
        <taxon>Gammaproteobacteria</taxon>
        <taxon>Alteromonadales</taxon>
        <taxon>Colwelliaceae</taxon>
        <taxon>Colwellia</taxon>
    </lineage>
</organism>
<accession>Q486U0</accession>
<comment type="function">
    <text evidence="1">Catalyzes the attachment of isoleucine to tRNA(Ile). As IleRS can inadvertently accommodate and process structurally similar amino acids such as valine, to avoid such errors it has two additional distinct tRNA(Ile)-dependent editing activities. One activity is designated as 'pretransfer' editing and involves the hydrolysis of activated Val-AMP. The other activity is designated 'posttransfer' editing and involves deacylation of mischarged Val-tRNA(Ile).</text>
</comment>
<comment type="catalytic activity">
    <reaction evidence="1">
        <text>tRNA(Ile) + L-isoleucine + ATP = L-isoleucyl-tRNA(Ile) + AMP + diphosphate</text>
        <dbReference type="Rhea" id="RHEA:11060"/>
        <dbReference type="Rhea" id="RHEA-COMP:9666"/>
        <dbReference type="Rhea" id="RHEA-COMP:9695"/>
        <dbReference type="ChEBI" id="CHEBI:30616"/>
        <dbReference type="ChEBI" id="CHEBI:33019"/>
        <dbReference type="ChEBI" id="CHEBI:58045"/>
        <dbReference type="ChEBI" id="CHEBI:78442"/>
        <dbReference type="ChEBI" id="CHEBI:78528"/>
        <dbReference type="ChEBI" id="CHEBI:456215"/>
        <dbReference type="EC" id="6.1.1.5"/>
    </reaction>
</comment>
<comment type="cofactor">
    <cofactor evidence="1">
        <name>Zn(2+)</name>
        <dbReference type="ChEBI" id="CHEBI:29105"/>
    </cofactor>
    <text evidence="1">Binds 1 zinc ion per subunit.</text>
</comment>
<comment type="subunit">
    <text evidence="1">Monomer.</text>
</comment>
<comment type="subcellular location">
    <subcellularLocation>
        <location evidence="1">Cytoplasm</location>
    </subcellularLocation>
</comment>
<comment type="domain">
    <text evidence="1">IleRS has two distinct active sites: one for aminoacylation and one for editing. The misactivated valine is translocated from the active site to the editing site, which sterically excludes the correctly activated isoleucine. The single editing site contains two valyl binding pockets, one specific for each substrate (Val-AMP or Val-tRNA(Ile)).</text>
</comment>
<comment type="similarity">
    <text evidence="1">Belongs to the class-I aminoacyl-tRNA synthetase family. IleS type 1 subfamily.</text>
</comment>
<evidence type="ECO:0000255" key="1">
    <source>
        <dbReference type="HAMAP-Rule" id="MF_02002"/>
    </source>
</evidence>
<dbReference type="EC" id="6.1.1.5" evidence="1"/>
<dbReference type="EMBL" id="CP000083">
    <property type="protein sequence ID" value="AAZ24004.1"/>
    <property type="molecule type" value="Genomic_DNA"/>
</dbReference>
<dbReference type="RefSeq" id="WP_011042019.1">
    <property type="nucleotide sequence ID" value="NC_003910.7"/>
</dbReference>
<dbReference type="SMR" id="Q486U0"/>
<dbReference type="STRING" id="167879.CPS_1182"/>
<dbReference type="KEGG" id="cps:CPS_1182"/>
<dbReference type="eggNOG" id="COG0060">
    <property type="taxonomic scope" value="Bacteria"/>
</dbReference>
<dbReference type="HOGENOM" id="CLU_001493_7_0_6"/>
<dbReference type="Proteomes" id="UP000000547">
    <property type="component" value="Chromosome"/>
</dbReference>
<dbReference type="GO" id="GO:0005829">
    <property type="term" value="C:cytosol"/>
    <property type="evidence" value="ECO:0007669"/>
    <property type="project" value="TreeGrafter"/>
</dbReference>
<dbReference type="GO" id="GO:0002161">
    <property type="term" value="F:aminoacyl-tRNA deacylase activity"/>
    <property type="evidence" value="ECO:0007669"/>
    <property type="project" value="InterPro"/>
</dbReference>
<dbReference type="GO" id="GO:0005524">
    <property type="term" value="F:ATP binding"/>
    <property type="evidence" value="ECO:0007669"/>
    <property type="project" value="UniProtKB-UniRule"/>
</dbReference>
<dbReference type="GO" id="GO:0004822">
    <property type="term" value="F:isoleucine-tRNA ligase activity"/>
    <property type="evidence" value="ECO:0007669"/>
    <property type="project" value="UniProtKB-UniRule"/>
</dbReference>
<dbReference type="GO" id="GO:0000049">
    <property type="term" value="F:tRNA binding"/>
    <property type="evidence" value="ECO:0007669"/>
    <property type="project" value="InterPro"/>
</dbReference>
<dbReference type="GO" id="GO:0008270">
    <property type="term" value="F:zinc ion binding"/>
    <property type="evidence" value="ECO:0007669"/>
    <property type="project" value="UniProtKB-UniRule"/>
</dbReference>
<dbReference type="GO" id="GO:0006428">
    <property type="term" value="P:isoleucyl-tRNA aminoacylation"/>
    <property type="evidence" value="ECO:0007669"/>
    <property type="project" value="UniProtKB-UniRule"/>
</dbReference>
<dbReference type="CDD" id="cd07960">
    <property type="entry name" value="Anticodon_Ia_Ile_BEm"/>
    <property type="match status" value="1"/>
</dbReference>
<dbReference type="FunFam" id="1.10.730.20:FF:000001">
    <property type="entry name" value="Isoleucine--tRNA ligase"/>
    <property type="match status" value="1"/>
</dbReference>
<dbReference type="FunFam" id="3.40.50.620:FF:000048">
    <property type="entry name" value="Isoleucine--tRNA ligase"/>
    <property type="match status" value="1"/>
</dbReference>
<dbReference type="FunFam" id="3.40.50.620:FF:000168">
    <property type="entry name" value="Isoleucine--tRNA ligase"/>
    <property type="match status" value="1"/>
</dbReference>
<dbReference type="Gene3D" id="1.10.730.20">
    <property type="match status" value="1"/>
</dbReference>
<dbReference type="Gene3D" id="3.40.50.620">
    <property type="entry name" value="HUPs"/>
    <property type="match status" value="2"/>
</dbReference>
<dbReference type="Gene3D" id="3.90.740.10">
    <property type="entry name" value="Valyl/Leucyl/Isoleucyl-tRNA synthetase, editing domain"/>
    <property type="match status" value="1"/>
</dbReference>
<dbReference type="HAMAP" id="MF_02002">
    <property type="entry name" value="Ile_tRNA_synth_type1"/>
    <property type="match status" value="1"/>
</dbReference>
<dbReference type="InterPro" id="IPR001412">
    <property type="entry name" value="aa-tRNA-synth_I_CS"/>
</dbReference>
<dbReference type="InterPro" id="IPR002300">
    <property type="entry name" value="aa-tRNA-synth_Ia"/>
</dbReference>
<dbReference type="InterPro" id="IPR033708">
    <property type="entry name" value="Anticodon_Ile_BEm"/>
</dbReference>
<dbReference type="InterPro" id="IPR002301">
    <property type="entry name" value="Ile-tRNA-ligase"/>
</dbReference>
<dbReference type="InterPro" id="IPR023585">
    <property type="entry name" value="Ile-tRNA-ligase_type1"/>
</dbReference>
<dbReference type="InterPro" id="IPR050081">
    <property type="entry name" value="Ile-tRNA_ligase"/>
</dbReference>
<dbReference type="InterPro" id="IPR013155">
    <property type="entry name" value="M/V/L/I-tRNA-synth_anticd-bd"/>
</dbReference>
<dbReference type="InterPro" id="IPR014729">
    <property type="entry name" value="Rossmann-like_a/b/a_fold"/>
</dbReference>
<dbReference type="InterPro" id="IPR009080">
    <property type="entry name" value="tRNAsynth_Ia_anticodon-bd"/>
</dbReference>
<dbReference type="InterPro" id="IPR009008">
    <property type="entry name" value="Val/Leu/Ile-tRNA-synth_edit"/>
</dbReference>
<dbReference type="InterPro" id="IPR010663">
    <property type="entry name" value="Znf_FPG/IleRS"/>
</dbReference>
<dbReference type="NCBIfam" id="TIGR00392">
    <property type="entry name" value="ileS"/>
    <property type="match status" value="1"/>
</dbReference>
<dbReference type="PANTHER" id="PTHR42765:SF1">
    <property type="entry name" value="ISOLEUCINE--TRNA LIGASE, MITOCHONDRIAL"/>
    <property type="match status" value="1"/>
</dbReference>
<dbReference type="PANTHER" id="PTHR42765">
    <property type="entry name" value="SOLEUCYL-TRNA SYNTHETASE"/>
    <property type="match status" value="1"/>
</dbReference>
<dbReference type="Pfam" id="PF08264">
    <property type="entry name" value="Anticodon_1"/>
    <property type="match status" value="1"/>
</dbReference>
<dbReference type="Pfam" id="PF00133">
    <property type="entry name" value="tRNA-synt_1"/>
    <property type="match status" value="1"/>
</dbReference>
<dbReference type="Pfam" id="PF06827">
    <property type="entry name" value="zf-FPG_IleRS"/>
    <property type="match status" value="1"/>
</dbReference>
<dbReference type="PRINTS" id="PR00984">
    <property type="entry name" value="TRNASYNTHILE"/>
</dbReference>
<dbReference type="SUPFAM" id="SSF47323">
    <property type="entry name" value="Anticodon-binding domain of a subclass of class I aminoacyl-tRNA synthetases"/>
    <property type="match status" value="1"/>
</dbReference>
<dbReference type="SUPFAM" id="SSF52374">
    <property type="entry name" value="Nucleotidylyl transferase"/>
    <property type="match status" value="1"/>
</dbReference>
<dbReference type="SUPFAM" id="SSF50677">
    <property type="entry name" value="ValRS/IleRS/LeuRS editing domain"/>
    <property type="match status" value="1"/>
</dbReference>
<dbReference type="PROSITE" id="PS00178">
    <property type="entry name" value="AA_TRNA_LIGASE_I"/>
    <property type="match status" value="1"/>
</dbReference>
<protein>
    <recommendedName>
        <fullName evidence="1">Isoleucine--tRNA ligase</fullName>
        <ecNumber evidence="1">6.1.1.5</ecNumber>
    </recommendedName>
    <alternativeName>
        <fullName evidence="1">Isoleucyl-tRNA synthetase</fullName>
        <shortName evidence="1">IleRS</shortName>
    </alternativeName>
</protein>
<proteinExistence type="inferred from homology"/>
<feature type="chain" id="PRO_0000098376" description="Isoleucine--tRNA ligase">
    <location>
        <begin position="1"/>
        <end position="953"/>
    </location>
</feature>
<feature type="short sequence motif" description="'HIGH' region">
    <location>
        <begin position="58"/>
        <end position="68"/>
    </location>
</feature>
<feature type="short sequence motif" description="'KMSKS' region">
    <location>
        <begin position="606"/>
        <end position="610"/>
    </location>
</feature>
<feature type="binding site" evidence="1">
    <location>
        <position position="565"/>
    </location>
    <ligand>
        <name>L-isoleucyl-5'-AMP</name>
        <dbReference type="ChEBI" id="CHEBI:178002"/>
    </ligand>
</feature>
<feature type="binding site" evidence="1">
    <location>
        <position position="609"/>
    </location>
    <ligand>
        <name>ATP</name>
        <dbReference type="ChEBI" id="CHEBI:30616"/>
    </ligand>
</feature>
<feature type="binding site" evidence="1">
    <location>
        <position position="916"/>
    </location>
    <ligand>
        <name>Zn(2+)</name>
        <dbReference type="ChEBI" id="CHEBI:29105"/>
    </ligand>
</feature>
<feature type="binding site" evidence="1">
    <location>
        <position position="919"/>
    </location>
    <ligand>
        <name>Zn(2+)</name>
        <dbReference type="ChEBI" id="CHEBI:29105"/>
    </ligand>
</feature>
<feature type="binding site" evidence="1">
    <location>
        <position position="936"/>
    </location>
    <ligand>
        <name>Zn(2+)</name>
        <dbReference type="ChEBI" id="CHEBI:29105"/>
    </ligand>
</feature>
<feature type="binding site" evidence="1">
    <location>
        <position position="939"/>
    </location>
    <ligand>
        <name>Zn(2+)</name>
        <dbReference type="ChEBI" id="CHEBI:29105"/>
    </ligand>
</feature>
<gene>
    <name evidence="1" type="primary">ileS</name>
    <name type="ordered locus">CPS_1182</name>
</gene>
<keyword id="KW-0030">Aminoacyl-tRNA synthetase</keyword>
<keyword id="KW-0067">ATP-binding</keyword>
<keyword id="KW-0963">Cytoplasm</keyword>
<keyword id="KW-0436">Ligase</keyword>
<keyword id="KW-0479">Metal-binding</keyword>
<keyword id="KW-0547">Nucleotide-binding</keyword>
<keyword id="KW-0648">Protein biosynthesis</keyword>
<keyword id="KW-0862">Zinc</keyword>
<name>SYI_COLP3</name>